<accession>B1AJ73</accession>
<accession>Q60058</accession>
<accession>Q9PQ56</accession>
<accession>Q9R3U4</accession>
<comment type="catalytic activity">
    <reaction evidence="1">
        <text>urea + 2 H2O + H(+) = hydrogencarbonate + 2 NH4(+)</text>
        <dbReference type="Rhea" id="RHEA:20557"/>
        <dbReference type="ChEBI" id="CHEBI:15377"/>
        <dbReference type="ChEBI" id="CHEBI:15378"/>
        <dbReference type="ChEBI" id="CHEBI:16199"/>
        <dbReference type="ChEBI" id="CHEBI:17544"/>
        <dbReference type="ChEBI" id="CHEBI:28938"/>
        <dbReference type="EC" id="3.5.1.5"/>
    </reaction>
</comment>
<comment type="cofactor">
    <cofactor evidence="1">
        <name>Ni cation</name>
        <dbReference type="ChEBI" id="CHEBI:25516"/>
    </cofactor>
    <text evidence="1">Binds 2 nickel ions per subunit.</text>
</comment>
<comment type="pathway">
    <text evidence="1">Nitrogen metabolism; urea degradation; CO(2) and NH(3) from urea (urease route): step 1/1.</text>
</comment>
<comment type="subunit">
    <text evidence="1">Heterotrimer of UreA (gamma), UreB (beta) and UreC (alpha) subunits. Three heterotrimers associate to form the active enzyme.</text>
</comment>
<comment type="subcellular location">
    <subcellularLocation>
        <location evidence="1">Cytoplasm</location>
    </subcellularLocation>
</comment>
<comment type="PTM">
    <text evidence="1">Carboxylation allows a single lysine to coordinate two nickel ions.</text>
</comment>
<comment type="similarity">
    <text evidence="1">Belongs to the metallo-dependent hydrolases superfamily. Urease alpha subunit family.</text>
</comment>
<evidence type="ECO:0000255" key="1">
    <source>
        <dbReference type="HAMAP-Rule" id="MF_01953"/>
    </source>
</evidence>
<sequence>MFKISRKNYSDLYGITTGDSVRLGDTNLWVKVEKDLTTYGEESVFGGGKTLREGMGMNSTMKLDDKLGNAEVMDLVITNALIVDYTGIYKADIGIKNGKIAAIGKSGNPHLTDNVDMIVGISTEISAGEGKIYTAGGLDTHVHWLEPEIVPVALDGGITTVIAGGTGMNDGTKATTVSPGKFWVKSALQAADGLSINAGFLAKGQGMEDPIFEQIAAGACGLKIHEDWGATGNAIDLALTVADKTDVAVAIHTDTLNEAGFVEHTIAAMKGRTIHAYHTEGAGGGHAPDILETVKYAHILPASTNPTIPYTVNTIAEHLDMLMVCHHLNPKVPEDVAFADSRIRSQTIAAEDLLHDMGAISIMSSDTLAMGRIGEVATRTWQMAHKMKAQFGSLKGDSEFSDNNRVKRYISKYTINPAIAHGVDSYIGSLEVGKLADIVAWEPKFFGAKPYYVVKMGVIARCVAGDPNASIPTCEPVIMRDQFGTYGRLLTNTSVSFVSKIGLENGIKEEYKLEKELLPVKNCRSVNKKSMKWNSATPNLEVDPQTFDAAVDFNDLENWLEQSASELAKKLKKTSSGKYILDAEPLTEAPLAQRYFLF</sequence>
<organism>
    <name type="scientific">Ureaplasma parvum serovar 3 (strain ATCC 27815 / 27 / NCTC 11736)</name>
    <dbReference type="NCBI Taxonomy" id="505682"/>
    <lineage>
        <taxon>Bacteria</taxon>
        <taxon>Bacillati</taxon>
        <taxon>Mycoplasmatota</taxon>
        <taxon>Mycoplasmoidales</taxon>
        <taxon>Mycoplasmoidaceae</taxon>
        <taxon>Ureaplasma</taxon>
    </lineage>
</organism>
<reference key="1">
    <citation type="submission" date="2008-02" db="EMBL/GenBank/DDBJ databases">
        <title>Genome sequence of Ureaplasma parvum serovar 3.</title>
        <authorList>
            <person name="Methe B.A."/>
            <person name="Glass J."/>
            <person name="Waites K."/>
            <person name="Shrivastava S."/>
        </authorList>
    </citation>
    <scope>NUCLEOTIDE SEQUENCE [LARGE SCALE GENOMIC DNA]</scope>
    <source>
        <strain>ATCC 27815 / 27 / NCTC 11736</strain>
    </source>
</reference>
<reference key="2">
    <citation type="journal article" date="1999" name="Int. J. Syst. Bacteriol.">
        <title>Phylogenetic analysis of Ureaplasma urealyticum -- support for the establishment of a new species, Ureaplasma parvum.</title>
        <authorList>
            <person name="Kong F."/>
            <person name="James G."/>
            <person name="Ma Z."/>
            <person name="Gordon S."/>
            <person name="Wang B."/>
            <person name="Gilbert G.L."/>
        </authorList>
    </citation>
    <scope>NUCLEOTIDE SEQUENCE [GENOMIC DNA] OF 1-135</scope>
</reference>
<protein>
    <recommendedName>
        <fullName evidence="1">Urease subunit alpha</fullName>
        <ecNumber evidence="1">3.5.1.5</ecNumber>
    </recommendedName>
    <alternativeName>
        <fullName evidence="1">Urea amidohydrolase subunit alpha</fullName>
    </alternativeName>
</protein>
<name>URE1_UREP2</name>
<gene>
    <name evidence="1" type="primary">ureC</name>
    <name type="ordered locus">UPA3_0451</name>
</gene>
<dbReference type="EC" id="3.5.1.5" evidence="1"/>
<dbReference type="EMBL" id="CP000942">
    <property type="protein sequence ID" value="ACA33025.1"/>
    <property type="molecule type" value="Genomic_DNA"/>
</dbReference>
<dbReference type="EMBL" id="AF085732">
    <property type="protein sequence ID" value="AAD28142.1"/>
    <property type="molecule type" value="Genomic_DNA"/>
</dbReference>
<dbReference type="RefSeq" id="WP_006688455.1">
    <property type="nucleotide sequence ID" value="NC_010503.1"/>
</dbReference>
<dbReference type="SMR" id="B1AJ73"/>
<dbReference type="MEROPS" id="M38.982"/>
<dbReference type="GeneID" id="29672358"/>
<dbReference type="KEGG" id="upa:UPA3_0451"/>
<dbReference type="HOGENOM" id="CLU_000980_0_0_14"/>
<dbReference type="UniPathway" id="UPA00258">
    <property type="reaction ID" value="UER00370"/>
</dbReference>
<dbReference type="Proteomes" id="UP000002162">
    <property type="component" value="Chromosome"/>
</dbReference>
<dbReference type="GO" id="GO:0005737">
    <property type="term" value="C:cytoplasm"/>
    <property type="evidence" value="ECO:0007669"/>
    <property type="project" value="UniProtKB-SubCell"/>
</dbReference>
<dbReference type="GO" id="GO:0016151">
    <property type="term" value="F:nickel cation binding"/>
    <property type="evidence" value="ECO:0007669"/>
    <property type="project" value="UniProtKB-UniRule"/>
</dbReference>
<dbReference type="GO" id="GO:0009039">
    <property type="term" value="F:urease activity"/>
    <property type="evidence" value="ECO:0007669"/>
    <property type="project" value="UniProtKB-UniRule"/>
</dbReference>
<dbReference type="GO" id="GO:0043419">
    <property type="term" value="P:urea catabolic process"/>
    <property type="evidence" value="ECO:0007669"/>
    <property type="project" value="UniProtKB-UniRule"/>
</dbReference>
<dbReference type="CDD" id="cd00375">
    <property type="entry name" value="Urease_alpha"/>
    <property type="match status" value="1"/>
</dbReference>
<dbReference type="Gene3D" id="3.20.20.140">
    <property type="entry name" value="Metal-dependent hydrolases"/>
    <property type="match status" value="1"/>
</dbReference>
<dbReference type="Gene3D" id="2.30.40.10">
    <property type="entry name" value="Urease, subunit C, domain 1"/>
    <property type="match status" value="1"/>
</dbReference>
<dbReference type="HAMAP" id="MF_01953">
    <property type="entry name" value="Urease_alpha"/>
    <property type="match status" value="1"/>
</dbReference>
<dbReference type="InterPro" id="IPR006680">
    <property type="entry name" value="Amidohydro-rel"/>
</dbReference>
<dbReference type="InterPro" id="IPR011059">
    <property type="entry name" value="Metal-dep_hydrolase_composite"/>
</dbReference>
<dbReference type="InterPro" id="IPR032466">
    <property type="entry name" value="Metal_Hydrolase"/>
</dbReference>
<dbReference type="InterPro" id="IPR011612">
    <property type="entry name" value="Urease_alpha_N_dom"/>
</dbReference>
<dbReference type="InterPro" id="IPR050112">
    <property type="entry name" value="Urease_alpha_subunit"/>
</dbReference>
<dbReference type="InterPro" id="IPR017950">
    <property type="entry name" value="Urease_AS"/>
</dbReference>
<dbReference type="InterPro" id="IPR005848">
    <property type="entry name" value="Urease_asu"/>
</dbReference>
<dbReference type="InterPro" id="IPR017951">
    <property type="entry name" value="Urease_asu_c"/>
</dbReference>
<dbReference type="InterPro" id="IPR029754">
    <property type="entry name" value="Urease_Ni-bd"/>
</dbReference>
<dbReference type="NCBIfam" id="NF009686">
    <property type="entry name" value="PRK13207.1"/>
    <property type="match status" value="1"/>
</dbReference>
<dbReference type="NCBIfam" id="TIGR01792">
    <property type="entry name" value="urease_alph"/>
    <property type="match status" value="1"/>
</dbReference>
<dbReference type="PANTHER" id="PTHR43440">
    <property type="entry name" value="UREASE"/>
    <property type="match status" value="1"/>
</dbReference>
<dbReference type="PANTHER" id="PTHR43440:SF1">
    <property type="entry name" value="UREASE"/>
    <property type="match status" value="1"/>
</dbReference>
<dbReference type="Pfam" id="PF01979">
    <property type="entry name" value="Amidohydro_1"/>
    <property type="match status" value="1"/>
</dbReference>
<dbReference type="Pfam" id="PF00449">
    <property type="entry name" value="Urease_alpha"/>
    <property type="match status" value="1"/>
</dbReference>
<dbReference type="PRINTS" id="PR01752">
    <property type="entry name" value="UREASE"/>
</dbReference>
<dbReference type="SUPFAM" id="SSF51338">
    <property type="entry name" value="Composite domain of metallo-dependent hydrolases"/>
    <property type="match status" value="1"/>
</dbReference>
<dbReference type="SUPFAM" id="SSF51556">
    <property type="entry name" value="Metallo-dependent hydrolases"/>
    <property type="match status" value="1"/>
</dbReference>
<dbReference type="PROSITE" id="PS01120">
    <property type="entry name" value="UREASE_1"/>
    <property type="match status" value="1"/>
</dbReference>
<dbReference type="PROSITE" id="PS00145">
    <property type="entry name" value="UREASE_2"/>
    <property type="match status" value="1"/>
</dbReference>
<dbReference type="PROSITE" id="PS51368">
    <property type="entry name" value="UREASE_3"/>
    <property type="match status" value="1"/>
</dbReference>
<proteinExistence type="inferred from homology"/>
<feature type="chain" id="PRO_1000088501" description="Urease subunit alpha">
    <location>
        <begin position="1"/>
        <end position="598"/>
    </location>
</feature>
<feature type="active site" description="Proton donor" evidence="1">
    <location>
        <position position="326"/>
    </location>
</feature>
<feature type="binding site" evidence="1">
    <location>
        <position position="141"/>
    </location>
    <ligand>
        <name>Ni(2+)</name>
        <dbReference type="ChEBI" id="CHEBI:49786"/>
        <label>1</label>
    </ligand>
</feature>
<feature type="binding site" evidence="1">
    <location>
        <position position="143"/>
    </location>
    <ligand>
        <name>Ni(2+)</name>
        <dbReference type="ChEBI" id="CHEBI:49786"/>
        <label>1</label>
    </ligand>
</feature>
<feature type="binding site" description="via carbamate group" evidence="1">
    <location>
        <position position="223"/>
    </location>
    <ligand>
        <name>Ni(2+)</name>
        <dbReference type="ChEBI" id="CHEBI:49786"/>
        <label>1</label>
    </ligand>
</feature>
<feature type="binding site" description="via carbamate group" evidence="1">
    <location>
        <position position="223"/>
    </location>
    <ligand>
        <name>Ni(2+)</name>
        <dbReference type="ChEBI" id="CHEBI:49786"/>
        <label>2</label>
    </ligand>
</feature>
<feature type="binding site" evidence="1">
    <location>
        <position position="225"/>
    </location>
    <ligand>
        <name>substrate</name>
    </ligand>
</feature>
<feature type="binding site" evidence="1">
    <location>
        <position position="252"/>
    </location>
    <ligand>
        <name>Ni(2+)</name>
        <dbReference type="ChEBI" id="CHEBI:49786"/>
        <label>2</label>
    </ligand>
</feature>
<feature type="binding site" evidence="1">
    <location>
        <position position="278"/>
    </location>
    <ligand>
        <name>Ni(2+)</name>
        <dbReference type="ChEBI" id="CHEBI:49786"/>
        <label>2</label>
    </ligand>
</feature>
<feature type="binding site" evidence="1">
    <location>
        <position position="366"/>
    </location>
    <ligand>
        <name>Ni(2+)</name>
        <dbReference type="ChEBI" id="CHEBI:49786"/>
        <label>1</label>
    </ligand>
</feature>
<feature type="modified residue" description="N6-carboxylysine" evidence="1">
    <location>
        <position position="223"/>
    </location>
</feature>
<keyword id="KW-0963">Cytoplasm</keyword>
<keyword id="KW-0378">Hydrolase</keyword>
<keyword id="KW-0479">Metal-binding</keyword>
<keyword id="KW-0533">Nickel</keyword>